<organism>
    <name type="scientific">Oryza sativa subsp. japonica</name>
    <name type="common">Rice</name>
    <dbReference type="NCBI Taxonomy" id="39947"/>
    <lineage>
        <taxon>Eukaryota</taxon>
        <taxon>Viridiplantae</taxon>
        <taxon>Streptophyta</taxon>
        <taxon>Embryophyta</taxon>
        <taxon>Tracheophyta</taxon>
        <taxon>Spermatophyta</taxon>
        <taxon>Magnoliopsida</taxon>
        <taxon>Liliopsida</taxon>
        <taxon>Poales</taxon>
        <taxon>Poaceae</taxon>
        <taxon>BOP clade</taxon>
        <taxon>Oryzoideae</taxon>
        <taxon>Oryzeae</taxon>
        <taxon>Oryzinae</taxon>
        <taxon>Oryza</taxon>
        <taxon>Oryza sativa</taxon>
    </lineage>
</organism>
<name>EXP18_ORYSJ</name>
<dbReference type="EMBL" id="AF394553">
    <property type="protein sequence ID" value="AAL24489.1"/>
    <property type="molecule type" value="Genomic_DNA"/>
</dbReference>
<dbReference type="EMBL" id="AC105730">
    <property type="protein sequence ID" value="AAM51841.1"/>
    <property type="molecule type" value="Genomic_DNA"/>
</dbReference>
<dbReference type="EMBL" id="DP000009">
    <property type="protein sequence ID" value="ABF94055.1"/>
    <property type="molecule type" value="Genomic_DNA"/>
</dbReference>
<dbReference type="EMBL" id="AP014959">
    <property type="protein sequence ID" value="BAS82363.1"/>
    <property type="molecule type" value="Genomic_DNA"/>
</dbReference>
<dbReference type="EMBL" id="CM000140">
    <property type="protein sequence ID" value="EAZ25633.1"/>
    <property type="molecule type" value="Genomic_DNA"/>
</dbReference>
<dbReference type="EMBL" id="AK243246">
    <property type="protein sequence ID" value="BAH01504.1"/>
    <property type="molecule type" value="mRNA"/>
</dbReference>
<dbReference type="EMBL" id="DQ061059">
    <property type="protein sequence ID" value="AAY63550.1"/>
    <property type="molecule type" value="mRNA"/>
</dbReference>
<dbReference type="RefSeq" id="XP_015629343.1">
    <property type="nucleotide sequence ID" value="XM_015773857.1"/>
</dbReference>
<dbReference type="SMR" id="Q4PR48"/>
<dbReference type="STRING" id="39947.Q4PR48"/>
<dbReference type="GlyCosmos" id="Q4PR48">
    <property type="glycosylation" value="1 site, No reported glycans"/>
</dbReference>
<dbReference type="PaxDb" id="39947-Q4PR48"/>
<dbReference type="EnsemblPlants" id="Os03t0155900-01">
    <property type="protein sequence ID" value="Os03t0155900-01"/>
    <property type="gene ID" value="Os03g0155900"/>
</dbReference>
<dbReference type="Gramene" id="Os03t0155900-01">
    <property type="protein sequence ID" value="Os03t0155900-01"/>
    <property type="gene ID" value="Os03g0155900"/>
</dbReference>
<dbReference type="eggNOG" id="ENOG502RRPH">
    <property type="taxonomic scope" value="Eukaryota"/>
</dbReference>
<dbReference type="HOGENOM" id="CLU_027462_0_3_1"/>
<dbReference type="InParanoid" id="Q4PR48"/>
<dbReference type="OMA" id="GWCKPGT"/>
<dbReference type="OrthoDB" id="636220at2759"/>
<dbReference type="Proteomes" id="UP000000763">
    <property type="component" value="Chromosome 3"/>
</dbReference>
<dbReference type="Proteomes" id="UP000007752">
    <property type="component" value="Chromosome 3"/>
</dbReference>
<dbReference type="Proteomes" id="UP000059680">
    <property type="component" value="Chromosome 3"/>
</dbReference>
<dbReference type="GO" id="GO:0005576">
    <property type="term" value="C:extracellular region"/>
    <property type="evidence" value="ECO:0007669"/>
    <property type="project" value="UniProtKB-KW"/>
</dbReference>
<dbReference type="GO" id="GO:0016020">
    <property type="term" value="C:membrane"/>
    <property type="evidence" value="ECO:0007669"/>
    <property type="project" value="UniProtKB-SubCell"/>
</dbReference>
<dbReference type="GO" id="GO:0009828">
    <property type="term" value="P:plant-type cell wall loosening"/>
    <property type="evidence" value="ECO:0000250"/>
    <property type="project" value="UniProtKB"/>
</dbReference>
<dbReference type="CDD" id="cd22274">
    <property type="entry name" value="DPBB_EXPA_N"/>
    <property type="match status" value="1"/>
</dbReference>
<dbReference type="Gene3D" id="2.60.40.760">
    <property type="entry name" value="Expansin, cellulose-binding-like domain"/>
    <property type="match status" value="1"/>
</dbReference>
<dbReference type="Gene3D" id="2.40.40.10">
    <property type="entry name" value="RlpA-like domain"/>
    <property type="match status" value="1"/>
</dbReference>
<dbReference type="InterPro" id="IPR007118">
    <property type="entry name" value="Expan_Lol_pI"/>
</dbReference>
<dbReference type="InterPro" id="IPR002963">
    <property type="entry name" value="Expansin"/>
</dbReference>
<dbReference type="InterPro" id="IPR007112">
    <property type="entry name" value="Expansin/allergen_DPBB_dom"/>
</dbReference>
<dbReference type="InterPro" id="IPR007117">
    <property type="entry name" value="Expansin_CBD"/>
</dbReference>
<dbReference type="InterPro" id="IPR036749">
    <property type="entry name" value="Expansin_CBD_sf"/>
</dbReference>
<dbReference type="InterPro" id="IPR009009">
    <property type="entry name" value="RlpA-like_DPBB"/>
</dbReference>
<dbReference type="InterPro" id="IPR036908">
    <property type="entry name" value="RlpA-like_sf"/>
</dbReference>
<dbReference type="PANTHER" id="PTHR31867">
    <property type="entry name" value="EXPANSIN-A15"/>
    <property type="match status" value="1"/>
</dbReference>
<dbReference type="Pfam" id="PF03330">
    <property type="entry name" value="DPBB_1"/>
    <property type="match status" value="1"/>
</dbReference>
<dbReference type="Pfam" id="PF01357">
    <property type="entry name" value="Expansin_C"/>
    <property type="match status" value="1"/>
</dbReference>
<dbReference type="PRINTS" id="PR01226">
    <property type="entry name" value="EXPANSIN"/>
</dbReference>
<dbReference type="PRINTS" id="PR01225">
    <property type="entry name" value="EXPANSNFAMLY"/>
</dbReference>
<dbReference type="SMART" id="SM00837">
    <property type="entry name" value="DPBB_1"/>
    <property type="match status" value="1"/>
</dbReference>
<dbReference type="SUPFAM" id="SSF50685">
    <property type="entry name" value="Barwin-like endoglucanases"/>
    <property type="match status" value="1"/>
</dbReference>
<dbReference type="SUPFAM" id="SSF49590">
    <property type="entry name" value="PHL pollen allergen"/>
    <property type="match status" value="1"/>
</dbReference>
<dbReference type="PROSITE" id="PS50843">
    <property type="entry name" value="EXPANSIN_CBD"/>
    <property type="match status" value="1"/>
</dbReference>
<dbReference type="PROSITE" id="PS50842">
    <property type="entry name" value="EXPANSIN_EG45"/>
    <property type="match status" value="1"/>
</dbReference>
<sequence>MGNIVLQLLAILALCIAPARSGWLQGTATFYGGADGSGTMGGACGYGNLYDQGYGINNAALSTPLFNNGASCGQCYLIICNYDKAPSGCRMGTAITVTGTNFCPPNYDLPYGGWCNTTRPHFDMSQPAWENIGIYSAGIVPILYQQVKCWRSGGVRFTITGLNYFELVLVTNMAGSGSIASMSVKGSSTGWIQMSRNWGANWQCLAGLAGQALSFTVTSTGGQTIVFDSVVPAGWSFGQTFSTYQQFDY</sequence>
<reference key="1">
    <citation type="journal article" date="2002" name="Plant Physiol.">
        <title>Expression of alpha-expansin and expansin-like genes in deepwater rice.</title>
        <authorList>
            <person name="Lee Y."/>
            <person name="Kende H."/>
        </authorList>
    </citation>
    <scope>NUCLEOTIDE SEQUENCE [GENOMIC DNA]</scope>
</reference>
<reference key="2">
    <citation type="journal article" date="2005" name="Genome Res.">
        <title>Sequence, annotation, and analysis of synteny between rice chromosome 3 and diverged grass species.</title>
        <authorList>
            <consortium name="The rice chromosome 3 sequencing consortium"/>
            <person name="Buell C.R."/>
            <person name="Yuan Q."/>
            <person name="Ouyang S."/>
            <person name="Liu J."/>
            <person name="Zhu W."/>
            <person name="Wang A."/>
            <person name="Maiti R."/>
            <person name="Haas B."/>
            <person name="Wortman J."/>
            <person name="Pertea M."/>
            <person name="Jones K.M."/>
            <person name="Kim M."/>
            <person name="Overton L."/>
            <person name="Tsitrin T."/>
            <person name="Fadrosh D."/>
            <person name="Bera J."/>
            <person name="Weaver B."/>
            <person name="Jin S."/>
            <person name="Johri S."/>
            <person name="Reardon M."/>
            <person name="Webb K."/>
            <person name="Hill J."/>
            <person name="Moffat K."/>
            <person name="Tallon L."/>
            <person name="Van Aken S."/>
            <person name="Lewis M."/>
            <person name="Utterback T."/>
            <person name="Feldblyum T."/>
            <person name="Zismann V."/>
            <person name="Iobst S."/>
            <person name="Hsiao J."/>
            <person name="de Vazeille A.R."/>
            <person name="Salzberg S.L."/>
            <person name="White O."/>
            <person name="Fraser C.M."/>
            <person name="Yu Y."/>
            <person name="Kim H."/>
            <person name="Rambo T."/>
            <person name="Currie J."/>
            <person name="Collura K."/>
            <person name="Kernodle-Thompson S."/>
            <person name="Wei F."/>
            <person name="Kudrna K."/>
            <person name="Ammiraju J.S.S."/>
            <person name="Luo M."/>
            <person name="Goicoechea J.L."/>
            <person name="Wing R.A."/>
            <person name="Henry D."/>
            <person name="Oates R."/>
            <person name="Palmer M."/>
            <person name="Pries G."/>
            <person name="Saski C."/>
            <person name="Simmons J."/>
            <person name="Soderlund C."/>
            <person name="Nelson W."/>
            <person name="de la Bastide M."/>
            <person name="Spiegel L."/>
            <person name="Nascimento L."/>
            <person name="Huang E."/>
            <person name="Preston R."/>
            <person name="Zutavern T."/>
            <person name="Palmer L."/>
            <person name="O'Shaughnessy A."/>
            <person name="Dike S."/>
            <person name="McCombie W.R."/>
            <person name="Minx P."/>
            <person name="Cordum H."/>
            <person name="Wilson R."/>
            <person name="Jin W."/>
            <person name="Lee H.R."/>
            <person name="Jiang J."/>
            <person name="Jackson S."/>
        </authorList>
    </citation>
    <scope>NUCLEOTIDE SEQUENCE [LARGE SCALE GENOMIC DNA]</scope>
    <source>
        <strain>cv. Nipponbare</strain>
    </source>
</reference>
<reference key="3">
    <citation type="journal article" date="2005" name="Nature">
        <title>The map-based sequence of the rice genome.</title>
        <authorList>
            <consortium name="International rice genome sequencing project (IRGSP)"/>
        </authorList>
    </citation>
    <scope>NUCLEOTIDE SEQUENCE [LARGE SCALE GENOMIC DNA]</scope>
    <source>
        <strain>cv. Nipponbare</strain>
    </source>
</reference>
<reference key="4">
    <citation type="journal article" date="2013" name="Rice">
        <title>Improvement of the Oryza sativa Nipponbare reference genome using next generation sequence and optical map data.</title>
        <authorList>
            <person name="Kawahara Y."/>
            <person name="de la Bastide M."/>
            <person name="Hamilton J.P."/>
            <person name="Kanamori H."/>
            <person name="McCombie W.R."/>
            <person name="Ouyang S."/>
            <person name="Schwartz D.C."/>
            <person name="Tanaka T."/>
            <person name="Wu J."/>
            <person name="Zhou S."/>
            <person name="Childs K.L."/>
            <person name="Davidson R.M."/>
            <person name="Lin H."/>
            <person name="Quesada-Ocampo L."/>
            <person name="Vaillancourt B."/>
            <person name="Sakai H."/>
            <person name="Lee S.S."/>
            <person name="Kim J."/>
            <person name="Numa H."/>
            <person name="Itoh T."/>
            <person name="Buell C.R."/>
            <person name="Matsumoto T."/>
        </authorList>
    </citation>
    <scope>GENOME REANNOTATION</scope>
    <source>
        <strain>cv. Nipponbare</strain>
    </source>
</reference>
<reference key="5">
    <citation type="journal article" date="2005" name="PLoS Biol.">
        <title>The genomes of Oryza sativa: a history of duplications.</title>
        <authorList>
            <person name="Yu J."/>
            <person name="Wang J."/>
            <person name="Lin W."/>
            <person name="Li S."/>
            <person name="Li H."/>
            <person name="Zhou J."/>
            <person name="Ni P."/>
            <person name="Dong W."/>
            <person name="Hu S."/>
            <person name="Zeng C."/>
            <person name="Zhang J."/>
            <person name="Zhang Y."/>
            <person name="Li R."/>
            <person name="Xu Z."/>
            <person name="Li S."/>
            <person name="Li X."/>
            <person name="Zheng H."/>
            <person name="Cong L."/>
            <person name="Lin L."/>
            <person name="Yin J."/>
            <person name="Geng J."/>
            <person name="Li G."/>
            <person name="Shi J."/>
            <person name="Liu J."/>
            <person name="Lv H."/>
            <person name="Li J."/>
            <person name="Wang J."/>
            <person name="Deng Y."/>
            <person name="Ran L."/>
            <person name="Shi X."/>
            <person name="Wang X."/>
            <person name="Wu Q."/>
            <person name="Li C."/>
            <person name="Ren X."/>
            <person name="Wang J."/>
            <person name="Wang X."/>
            <person name="Li D."/>
            <person name="Liu D."/>
            <person name="Zhang X."/>
            <person name="Ji Z."/>
            <person name="Zhao W."/>
            <person name="Sun Y."/>
            <person name="Zhang Z."/>
            <person name="Bao J."/>
            <person name="Han Y."/>
            <person name="Dong L."/>
            <person name="Ji J."/>
            <person name="Chen P."/>
            <person name="Wu S."/>
            <person name="Liu J."/>
            <person name="Xiao Y."/>
            <person name="Bu D."/>
            <person name="Tan J."/>
            <person name="Yang L."/>
            <person name="Ye C."/>
            <person name="Zhang J."/>
            <person name="Xu J."/>
            <person name="Zhou Y."/>
            <person name="Yu Y."/>
            <person name="Zhang B."/>
            <person name="Zhuang S."/>
            <person name="Wei H."/>
            <person name="Liu B."/>
            <person name="Lei M."/>
            <person name="Yu H."/>
            <person name="Li Y."/>
            <person name="Xu H."/>
            <person name="Wei S."/>
            <person name="He X."/>
            <person name="Fang L."/>
            <person name="Zhang Z."/>
            <person name="Zhang Y."/>
            <person name="Huang X."/>
            <person name="Su Z."/>
            <person name="Tong W."/>
            <person name="Li J."/>
            <person name="Tong Z."/>
            <person name="Li S."/>
            <person name="Ye J."/>
            <person name="Wang L."/>
            <person name="Fang L."/>
            <person name="Lei T."/>
            <person name="Chen C.-S."/>
            <person name="Chen H.-C."/>
            <person name="Xu Z."/>
            <person name="Li H."/>
            <person name="Huang H."/>
            <person name="Zhang F."/>
            <person name="Xu H."/>
            <person name="Li N."/>
            <person name="Zhao C."/>
            <person name="Li S."/>
            <person name="Dong L."/>
            <person name="Huang Y."/>
            <person name="Li L."/>
            <person name="Xi Y."/>
            <person name="Qi Q."/>
            <person name="Li W."/>
            <person name="Zhang B."/>
            <person name="Hu W."/>
            <person name="Zhang Y."/>
            <person name="Tian X."/>
            <person name="Jiao Y."/>
            <person name="Liang X."/>
            <person name="Jin J."/>
            <person name="Gao L."/>
            <person name="Zheng W."/>
            <person name="Hao B."/>
            <person name="Liu S.-M."/>
            <person name="Wang W."/>
            <person name="Yuan L."/>
            <person name="Cao M."/>
            <person name="McDermott J."/>
            <person name="Samudrala R."/>
            <person name="Wang J."/>
            <person name="Wong G.K.-S."/>
            <person name="Yang H."/>
        </authorList>
    </citation>
    <scope>NUCLEOTIDE SEQUENCE [LARGE SCALE GENOMIC DNA]</scope>
    <source>
        <strain>cv. Nipponbare</strain>
    </source>
</reference>
<reference key="6">
    <citation type="submission" date="2006-10" db="EMBL/GenBank/DDBJ databases">
        <title>Oryza sativa full length cDNA.</title>
        <authorList>
            <consortium name="The rice full-length cDNA consortium"/>
        </authorList>
    </citation>
    <scope>NUCLEOTIDE SEQUENCE [LARGE SCALE MRNA]</scope>
    <source>
        <strain>cv. Nipponbare</strain>
    </source>
</reference>
<reference key="7">
    <citation type="journal article" date="2005" name="Mol. Cells">
        <title>Characterization and transcriptional expression of the alpha-expansin gene family in rice.</title>
        <authorList>
            <person name="Shin J.-H."/>
            <person name="Jeong D.-H."/>
            <person name="Park M.C."/>
            <person name="An G."/>
        </authorList>
    </citation>
    <scope>NUCLEOTIDE SEQUENCE [MRNA] OF 9-249</scope>
    <scope>TISSUE SPECIFICITY</scope>
    <source>
        <strain>cv. Dongjin</strain>
    </source>
</reference>
<reference key="8">
    <citation type="journal article" date="2004" name="Plant Mol. Biol.">
        <title>Nomenclature for members of the expansin superfamily of genes and proteins.</title>
        <authorList>
            <person name="Kende H."/>
            <person name="Bradford K.J."/>
            <person name="Brummell D.A."/>
            <person name="Cho H.-T."/>
            <person name="Cosgrove D.J."/>
            <person name="Fleming A.J."/>
            <person name="Gehring C."/>
            <person name="Lee Y."/>
            <person name="McQueen-Mason S.J."/>
            <person name="Rose J.K.C."/>
            <person name="Voesenek L.A.C."/>
        </authorList>
    </citation>
    <scope>NOMENCLATURE</scope>
</reference>
<accession>Q4PR48</accession>
<accession>A3AE94</accession>
<accession>Q7G6Z4</accession>
<accession>Q946I4</accession>
<keyword id="KW-0134">Cell wall</keyword>
<keyword id="KW-0961">Cell wall biogenesis/degradation</keyword>
<keyword id="KW-0325">Glycoprotein</keyword>
<keyword id="KW-0472">Membrane</keyword>
<keyword id="KW-1185">Reference proteome</keyword>
<keyword id="KW-0964">Secreted</keyword>
<keyword id="KW-0732">Signal</keyword>
<gene>
    <name type="primary">EXPA18</name>
    <name type="synonym">EXP18</name>
    <name type="ordered locus">Os03g0155900</name>
    <name type="ordered locus">LOC_Os03g06040</name>
    <name evidence="7" type="ORF">OsJ_09461</name>
    <name type="ORF">OSJNBa0011L14.15</name>
</gene>
<protein>
    <recommendedName>
        <fullName>Expansin-A18</fullName>
    </recommendedName>
    <alternativeName>
        <fullName>Alpha-expansin-18</fullName>
    </alternativeName>
    <alternativeName>
        <fullName>OsEXP18</fullName>
    </alternativeName>
    <alternativeName>
        <fullName>OsEXPA18</fullName>
    </alternativeName>
    <alternativeName>
        <fullName>OsaEXPa1.3</fullName>
    </alternativeName>
</protein>
<comment type="function">
    <text evidence="1">May cause loosening and extension of plant cell walls by disrupting non-covalent bonding between cellulose microfibrils and matrix glucans. No enzymatic activity has been found. May be required for rapid internodal elongation in deepwater rice during submergence (By similarity).</text>
</comment>
<comment type="subcellular location">
    <subcellularLocation>
        <location evidence="1">Secreted</location>
        <location evidence="1">Cell wall</location>
    </subcellularLocation>
    <subcellularLocation>
        <location evidence="1">Membrane</location>
        <topology evidence="1">Peripheral membrane protein</topology>
    </subcellularLocation>
</comment>
<comment type="tissue specificity">
    <text evidence="5">Expressed in roots.</text>
</comment>
<comment type="similarity">
    <text evidence="6">Belongs to the expansin family. Expansin A subfamily.</text>
</comment>
<comment type="online information" name="EXPANSIN homepage">
    <link uri="https://www.dept.psu.edu/biology/groups/expansins/index.htm"/>
</comment>
<feature type="signal peptide" evidence="2">
    <location>
        <begin position="1"/>
        <end position="21"/>
    </location>
</feature>
<feature type="chain" id="PRO_0000251997" description="Expansin-A18">
    <location>
        <begin position="22"/>
        <end position="249"/>
    </location>
</feature>
<feature type="domain" description="Expansin-like EG45" evidence="4">
    <location>
        <begin position="41"/>
        <end position="154"/>
    </location>
</feature>
<feature type="domain" description="Expansin-like CBD" evidence="3">
    <location>
        <begin position="164"/>
        <end position="243"/>
    </location>
</feature>
<feature type="glycosylation site" description="N-linked (GlcNAc...) asparagine" evidence="2">
    <location>
        <position position="116"/>
    </location>
</feature>
<evidence type="ECO:0000250" key="1"/>
<evidence type="ECO:0000255" key="2"/>
<evidence type="ECO:0000255" key="3">
    <source>
        <dbReference type="PROSITE-ProRule" id="PRU00078"/>
    </source>
</evidence>
<evidence type="ECO:0000255" key="4">
    <source>
        <dbReference type="PROSITE-ProRule" id="PRU00079"/>
    </source>
</evidence>
<evidence type="ECO:0000269" key="5">
    <source>
    </source>
</evidence>
<evidence type="ECO:0000305" key="6"/>
<evidence type="ECO:0000312" key="7">
    <source>
        <dbReference type="EMBL" id="EAZ25633.1"/>
    </source>
</evidence>
<proteinExistence type="evidence at transcript level"/>